<keyword id="KW-0131">Cell cycle</keyword>
<keyword id="KW-0132">Cell division</keyword>
<keyword id="KW-0963">Cytoplasm</keyword>
<keyword id="KW-0206">Cytoskeleton</keyword>
<keyword id="KW-0498">Mitosis</keyword>
<keyword id="KW-1185">Reference proteome</keyword>
<keyword id="KW-0717">Septation</keyword>
<organism>
    <name type="scientific">Schizosaccharomyces pombe (strain 972 / ATCC 24843)</name>
    <name type="common">Fission yeast</name>
    <dbReference type="NCBI Taxonomy" id="284812"/>
    <lineage>
        <taxon>Eukaryota</taxon>
        <taxon>Fungi</taxon>
        <taxon>Dikarya</taxon>
        <taxon>Ascomycota</taxon>
        <taxon>Taphrinomycotina</taxon>
        <taxon>Schizosaccharomycetes</taxon>
        <taxon>Schizosaccharomycetales</taxon>
        <taxon>Schizosaccharomycetaceae</taxon>
        <taxon>Schizosaccharomyces</taxon>
    </lineage>
</organism>
<comment type="function">
    <text evidence="1">Has a role in promoting the onset of septum formation during the latter stages of mitosis.</text>
</comment>
<comment type="subunit">
    <text evidence="1">Interacts with sid2.</text>
</comment>
<comment type="interaction">
    <interactant intactId="EBI-1563433">
        <id>O94360</id>
    </interactant>
    <interactant intactId="EBI-1563447">
        <id>Q09898</id>
        <label>sid2</label>
    </interactant>
    <organismsDiffer>false</organismsDiffer>
    <experiments>3</experiments>
</comment>
<comment type="subcellular location">
    <subcellularLocation>
        <location evidence="1">Cytoplasm</location>
        <location evidence="1">Cytoskeleton</location>
        <location evidence="1">Microtubule organizing center</location>
        <location evidence="1">Spindle pole body</location>
    </subcellularLocation>
    <text>Spindle pole body throughout mitosis, relocates to the medial ring during interphase.</text>
</comment>
<comment type="similarity">
    <text evidence="2">Belongs to the MOB1/phocein family.</text>
</comment>
<proteinExistence type="evidence at protein level"/>
<name>MOB1_SCHPO</name>
<sequence>MFGFSNKTAKTFRVRKTEAGTKHYQLRQYAEATLGSGSLMEAVKLPKGEDLNEWIAMNTMDFYTQINMLYGTITEFCTAASCPQMNAGPSYEYYWQDDKIYTKPTRMSAPDYINNLLDWTQEKLDDKKLFPTEIGVEFPKNFRKVIQQIFRRLFRIYAHIYCSHFHVMVAMELESYLNTSFKHFVFFCREFGLMDNKEYAPMQDLVDSMV</sequence>
<feature type="chain" id="PRO_0000193580" description="Maintenance of ploidy protein mob1">
    <location>
        <begin position="1"/>
        <end position="210"/>
    </location>
</feature>
<reference key="1">
    <citation type="journal article" date="2000" name="J. Cell Sci.">
        <title>The S. pombe orthologue of the S. cerevisiae mob1 gene is essential and functions in signalling the onset of septum formation.</title>
        <authorList>
            <person name="Salimova E."/>
            <person name="Sohrmann M."/>
            <person name="Fournier N."/>
            <person name="Simanis V."/>
        </authorList>
    </citation>
    <scope>NUCLEOTIDE SEQUENCE [GENOMIC DNA]</scope>
    <scope>FUNCTION</scope>
    <scope>INTERACTION WITH SID2</scope>
    <scope>SUBCELLULAR LOCATION</scope>
    <source>
        <strain>SP2198</strain>
    </source>
</reference>
<reference key="2">
    <citation type="journal article" date="2002" name="Nature">
        <title>The genome sequence of Schizosaccharomyces pombe.</title>
        <authorList>
            <person name="Wood V."/>
            <person name="Gwilliam R."/>
            <person name="Rajandream M.A."/>
            <person name="Lyne M.H."/>
            <person name="Lyne R."/>
            <person name="Stewart A."/>
            <person name="Sgouros J.G."/>
            <person name="Peat N."/>
            <person name="Hayles J."/>
            <person name="Baker S.G."/>
            <person name="Basham D."/>
            <person name="Bowman S."/>
            <person name="Brooks K."/>
            <person name="Brown D."/>
            <person name="Brown S."/>
            <person name="Chillingworth T."/>
            <person name="Churcher C.M."/>
            <person name="Collins M."/>
            <person name="Connor R."/>
            <person name="Cronin A."/>
            <person name="Davis P."/>
            <person name="Feltwell T."/>
            <person name="Fraser A."/>
            <person name="Gentles S."/>
            <person name="Goble A."/>
            <person name="Hamlin N."/>
            <person name="Harris D.E."/>
            <person name="Hidalgo J."/>
            <person name="Hodgson G."/>
            <person name="Holroyd S."/>
            <person name="Hornsby T."/>
            <person name="Howarth S."/>
            <person name="Huckle E.J."/>
            <person name="Hunt S."/>
            <person name="Jagels K."/>
            <person name="James K.D."/>
            <person name="Jones L."/>
            <person name="Jones M."/>
            <person name="Leather S."/>
            <person name="McDonald S."/>
            <person name="McLean J."/>
            <person name="Mooney P."/>
            <person name="Moule S."/>
            <person name="Mungall K.L."/>
            <person name="Murphy L.D."/>
            <person name="Niblett D."/>
            <person name="Odell C."/>
            <person name="Oliver K."/>
            <person name="O'Neil S."/>
            <person name="Pearson D."/>
            <person name="Quail M.A."/>
            <person name="Rabbinowitsch E."/>
            <person name="Rutherford K.M."/>
            <person name="Rutter S."/>
            <person name="Saunders D."/>
            <person name="Seeger K."/>
            <person name="Sharp S."/>
            <person name="Skelton J."/>
            <person name="Simmonds M.N."/>
            <person name="Squares R."/>
            <person name="Squares S."/>
            <person name="Stevens K."/>
            <person name="Taylor K."/>
            <person name="Taylor R.G."/>
            <person name="Tivey A."/>
            <person name="Walsh S.V."/>
            <person name="Warren T."/>
            <person name="Whitehead S."/>
            <person name="Woodward J.R."/>
            <person name="Volckaert G."/>
            <person name="Aert R."/>
            <person name="Robben J."/>
            <person name="Grymonprez B."/>
            <person name="Weltjens I."/>
            <person name="Vanstreels E."/>
            <person name="Rieger M."/>
            <person name="Schaefer M."/>
            <person name="Mueller-Auer S."/>
            <person name="Gabel C."/>
            <person name="Fuchs M."/>
            <person name="Duesterhoeft A."/>
            <person name="Fritzc C."/>
            <person name="Holzer E."/>
            <person name="Moestl D."/>
            <person name="Hilbert H."/>
            <person name="Borzym K."/>
            <person name="Langer I."/>
            <person name="Beck A."/>
            <person name="Lehrach H."/>
            <person name="Reinhardt R."/>
            <person name="Pohl T.M."/>
            <person name="Eger P."/>
            <person name="Zimmermann W."/>
            <person name="Wedler H."/>
            <person name="Wambutt R."/>
            <person name="Purnelle B."/>
            <person name="Goffeau A."/>
            <person name="Cadieu E."/>
            <person name="Dreano S."/>
            <person name="Gloux S."/>
            <person name="Lelaure V."/>
            <person name="Mottier S."/>
            <person name="Galibert F."/>
            <person name="Aves S.J."/>
            <person name="Xiang Z."/>
            <person name="Hunt C."/>
            <person name="Moore K."/>
            <person name="Hurst S.M."/>
            <person name="Lucas M."/>
            <person name="Rochet M."/>
            <person name="Gaillardin C."/>
            <person name="Tallada V.A."/>
            <person name="Garzon A."/>
            <person name="Thode G."/>
            <person name="Daga R.R."/>
            <person name="Cruzado L."/>
            <person name="Jimenez J."/>
            <person name="Sanchez M."/>
            <person name="del Rey F."/>
            <person name="Benito J."/>
            <person name="Dominguez A."/>
            <person name="Revuelta J.L."/>
            <person name="Moreno S."/>
            <person name="Armstrong J."/>
            <person name="Forsburg S.L."/>
            <person name="Cerutti L."/>
            <person name="Lowe T."/>
            <person name="McCombie W.R."/>
            <person name="Paulsen I."/>
            <person name="Potashkin J."/>
            <person name="Shpakovski G.V."/>
            <person name="Ussery D."/>
            <person name="Barrell B.G."/>
            <person name="Nurse P."/>
        </authorList>
    </citation>
    <scope>NUCLEOTIDE SEQUENCE [LARGE SCALE GENOMIC DNA]</scope>
    <source>
        <strain>972 / ATCC 24843</strain>
    </source>
</reference>
<protein>
    <recommendedName>
        <fullName>Maintenance of ploidy protein mob1</fullName>
    </recommendedName>
</protein>
<gene>
    <name type="primary">mob1</name>
    <name type="ORF">SPBC428.13c</name>
</gene>
<dbReference type="EMBL" id="CU329671">
    <property type="protein sequence ID" value="CAA22288.1"/>
    <property type="molecule type" value="Genomic_DNA"/>
</dbReference>
<dbReference type="PIR" id="T40465">
    <property type="entry name" value="T40465"/>
</dbReference>
<dbReference type="RefSeq" id="NP_595191.1">
    <property type="nucleotide sequence ID" value="NM_001021098.2"/>
</dbReference>
<dbReference type="SMR" id="O94360"/>
<dbReference type="BioGRID" id="277362">
    <property type="interactions" value="31"/>
</dbReference>
<dbReference type="FunCoup" id="O94360">
    <property type="interactions" value="617"/>
</dbReference>
<dbReference type="IntAct" id="O94360">
    <property type="interactions" value="2"/>
</dbReference>
<dbReference type="STRING" id="284812.O94360"/>
<dbReference type="iPTMnet" id="O94360"/>
<dbReference type="PaxDb" id="4896-SPBC428.13c.1"/>
<dbReference type="EnsemblFungi" id="SPBC428.13c.1">
    <property type="protein sequence ID" value="SPBC428.13c.1:pep"/>
    <property type="gene ID" value="SPBC428.13c"/>
</dbReference>
<dbReference type="GeneID" id="2540845"/>
<dbReference type="KEGG" id="spo:2540845"/>
<dbReference type="PomBase" id="SPBC428.13c">
    <property type="gene designation" value="mob1"/>
</dbReference>
<dbReference type="VEuPathDB" id="FungiDB:SPBC428.13c"/>
<dbReference type="eggNOG" id="KOG0440">
    <property type="taxonomic scope" value="Eukaryota"/>
</dbReference>
<dbReference type="HOGENOM" id="CLU_038321_3_2_1"/>
<dbReference type="InParanoid" id="O94360"/>
<dbReference type="OMA" id="VDNEQMF"/>
<dbReference type="PhylomeDB" id="O94360"/>
<dbReference type="CD-CODE" id="576F0A76">
    <property type="entry name" value="Centrosome"/>
</dbReference>
<dbReference type="PRO" id="PR:O94360"/>
<dbReference type="Proteomes" id="UP000002485">
    <property type="component" value="Chromosome II"/>
</dbReference>
<dbReference type="GO" id="GO:0032153">
    <property type="term" value="C:cell division site"/>
    <property type="evidence" value="ECO:0000314"/>
    <property type="project" value="PomBase"/>
</dbReference>
<dbReference type="GO" id="GO:0005737">
    <property type="term" value="C:cytoplasm"/>
    <property type="evidence" value="ECO:0000318"/>
    <property type="project" value="GO_Central"/>
</dbReference>
<dbReference type="GO" id="GO:0005829">
    <property type="term" value="C:cytosol"/>
    <property type="evidence" value="ECO:0007005"/>
    <property type="project" value="PomBase"/>
</dbReference>
<dbReference type="GO" id="GO:0031097">
    <property type="term" value="C:medial cortex"/>
    <property type="evidence" value="ECO:0000314"/>
    <property type="project" value="PomBase"/>
</dbReference>
<dbReference type="GO" id="GO:0044732">
    <property type="term" value="C:mitotic spindle pole body"/>
    <property type="evidence" value="ECO:0000314"/>
    <property type="project" value="PomBase"/>
</dbReference>
<dbReference type="GO" id="GO:0071958">
    <property type="term" value="C:new mitotic spindle pole body"/>
    <property type="evidence" value="ECO:0000314"/>
    <property type="project" value="PomBase"/>
</dbReference>
<dbReference type="GO" id="GO:0005634">
    <property type="term" value="C:nucleus"/>
    <property type="evidence" value="ECO:0007005"/>
    <property type="project" value="PomBase"/>
</dbReference>
<dbReference type="GO" id="GO:0071957">
    <property type="term" value="C:old mitotic spindle pole body"/>
    <property type="evidence" value="ECO:0000314"/>
    <property type="project" value="PomBase"/>
</dbReference>
<dbReference type="GO" id="GO:0034973">
    <property type="term" value="C:Sid2-Mob1 complex"/>
    <property type="evidence" value="ECO:0000353"/>
    <property type="project" value="PomBase"/>
</dbReference>
<dbReference type="GO" id="GO:0030295">
    <property type="term" value="F:protein kinase activator activity"/>
    <property type="evidence" value="ECO:0000316"/>
    <property type="project" value="PomBase"/>
</dbReference>
<dbReference type="GO" id="GO:0051301">
    <property type="term" value="P:cell division"/>
    <property type="evidence" value="ECO:0000318"/>
    <property type="project" value="GO_Central"/>
</dbReference>
<dbReference type="GO" id="GO:0000917">
    <property type="term" value="P:division septum assembly"/>
    <property type="evidence" value="ECO:0007669"/>
    <property type="project" value="UniProtKB-KW"/>
</dbReference>
<dbReference type="GO" id="GO:1903473">
    <property type="term" value="P:positive regulation of mitotic actomyosin contractile ring contraction"/>
    <property type="evidence" value="ECO:0000315"/>
    <property type="project" value="PomBase"/>
</dbReference>
<dbReference type="GO" id="GO:0031031">
    <property type="term" value="P:positive regulation of septation initiation signaling"/>
    <property type="evidence" value="ECO:0000315"/>
    <property type="project" value="PomBase"/>
</dbReference>
<dbReference type="GO" id="GO:0007165">
    <property type="term" value="P:signal transduction"/>
    <property type="evidence" value="ECO:0000318"/>
    <property type="project" value="GO_Central"/>
</dbReference>
<dbReference type="FunFam" id="1.20.140.30:FF:000001">
    <property type="entry name" value="MOB kinase activator 1A"/>
    <property type="match status" value="1"/>
</dbReference>
<dbReference type="Gene3D" id="1.20.140.30">
    <property type="entry name" value="MOB kinase activator"/>
    <property type="match status" value="1"/>
</dbReference>
<dbReference type="InterPro" id="IPR005301">
    <property type="entry name" value="MOB_kinase_act_fam"/>
</dbReference>
<dbReference type="InterPro" id="IPR036703">
    <property type="entry name" value="MOB_kinase_act_sf"/>
</dbReference>
<dbReference type="PANTHER" id="PTHR22599">
    <property type="entry name" value="MPS ONE BINDER KINASE ACTIVATOR-LIKE MOB"/>
    <property type="match status" value="1"/>
</dbReference>
<dbReference type="Pfam" id="PF03637">
    <property type="entry name" value="Mob1_phocein"/>
    <property type="match status" value="1"/>
</dbReference>
<dbReference type="SMART" id="SM01388">
    <property type="entry name" value="Mob1_phocein"/>
    <property type="match status" value="1"/>
</dbReference>
<dbReference type="SUPFAM" id="SSF101152">
    <property type="entry name" value="Mob1/phocein"/>
    <property type="match status" value="1"/>
</dbReference>
<accession>O94360</accession>
<evidence type="ECO:0000269" key="1">
    <source>
    </source>
</evidence>
<evidence type="ECO:0000305" key="2"/>